<sequence>MIDGDGFRPNVGIVICNRDGQVLWAKRYGQHSWQFPQGGVDDGETPEQAMYRELYEEIGLKPEDVTIMATSRNWLKYRLPKRLVRWDSSPVCIGQKQKWFLLQLDPGRESRIQFGCHGHPEFDDWRWVSFWYPVRQVVSFKREVYRRVMKEFAPLAMPVPAVQVNKKDGRRNRPR</sequence>
<name>RPPH_AERHH</name>
<comment type="function">
    <text evidence="1">Accelerates the degradation of transcripts by removing pyrophosphate from the 5'-end of triphosphorylated RNA, leading to a more labile monophosphorylated state that can stimulate subsequent ribonuclease cleavage.</text>
</comment>
<comment type="cofactor">
    <cofactor evidence="1">
        <name>a divalent metal cation</name>
        <dbReference type="ChEBI" id="CHEBI:60240"/>
    </cofactor>
</comment>
<comment type="similarity">
    <text evidence="1">Belongs to the Nudix hydrolase family. RppH subfamily.</text>
</comment>
<dbReference type="EC" id="3.6.1.-" evidence="1"/>
<dbReference type="EMBL" id="CP000462">
    <property type="protein sequence ID" value="ABK39506.1"/>
    <property type="molecule type" value="Genomic_DNA"/>
</dbReference>
<dbReference type="RefSeq" id="WP_011704634.1">
    <property type="nucleotide sequence ID" value="NC_008570.1"/>
</dbReference>
<dbReference type="RefSeq" id="YP_855214.1">
    <property type="nucleotide sequence ID" value="NC_008570.1"/>
</dbReference>
<dbReference type="SMR" id="A0KG29"/>
<dbReference type="STRING" id="380703.AHA_0672"/>
<dbReference type="EnsemblBacteria" id="ABK39506">
    <property type="protein sequence ID" value="ABK39506"/>
    <property type="gene ID" value="AHA_0672"/>
</dbReference>
<dbReference type="GeneID" id="4490679"/>
<dbReference type="KEGG" id="aha:AHA_0672"/>
<dbReference type="PATRIC" id="fig|380703.7.peg.673"/>
<dbReference type="eggNOG" id="COG1051">
    <property type="taxonomic scope" value="Bacteria"/>
</dbReference>
<dbReference type="HOGENOM" id="CLU_087195_3_2_6"/>
<dbReference type="OrthoDB" id="9816040at2"/>
<dbReference type="Proteomes" id="UP000000756">
    <property type="component" value="Chromosome"/>
</dbReference>
<dbReference type="GO" id="GO:0005737">
    <property type="term" value="C:cytoplasm"/>
    <property type="evidence" value="ECO:0007669"/>
    <property type="project" value="TreeGrafter"/>
</dbReference>
<dbReference type="GO" id="GO:0034353">
    <property type="term" value="F:mRNA 5'-diphosphatase activity"/>
    <property type="evidence" value="ECO:0007669"/>
    <property type="project" value="TreeGrafter"/>
</dbReference>
<dbReference type="GO" id="GO:0006402">
    <property type="term" value="P:mRNA catabolic process"/>
    <property type="evidence" value="ECO:0007669"/>
    <property type="project" value="TreeGrafter"/>
</dbReference>
<dbReference type="CDD" id="cd03671">
    <property type="entry name" value="NUDIX_Ap4A_hydrolase_plant_like"/>
    <property type="match status" value="1"/>
</dbReference>
<dbReference type="FunFam" id="3.90.79.10:FF:000001">
    <property type="entry name" value="RNA pyrophosphohydrolase"/>
    <property type="match status" value="1"/>
</dbReference>
<dbReference type="Gene3D" id="3.90.79.10">
    <property type="entry name" value="Nucleoside Triphosphate Pyrophosphohydrolase"/>
    <property type="match status" value="1"/>
</dbReference>
<dbReference type="HAMAP" id="MF_00298">
    <property type="entry name" value="Nudix_RppH"/>
    <property type="match status" value="1"/>
</dbReference>
<dbReference type="InterPro" id="IPR020476">
    <property type="entry name" value="Nudix_hydrolase"/>
</dbReference>
<dbReference type="InterPro" id="IPR015797">
    <property type="entry name" value="NUDIX_hydrolase-like_dom_sf"/>
</dbReference>
<dbReference type="InterPro" id="IPR020084">
    <property type="entry name" value="NUDIX_hydrolase_CS"/>
</dbReference>
<dbReference type="InterPro" id="IPR000086">
    <property type="entry name" value="NUDIX_hydrolase_dom"/>
</dbReference>
<dbReference type="InterPro" id="IPR022927">
    <property type="entry name" value="RppH"/>
</dbReference>
<dbReference type="NCBIfam" id="NF001934">
    <property type="entry name" value="PRK00714.1-1"/>
    <property type="match status" value="1"/>
</dbReference>
<dbReference type="NCBIfam" id="NF001937">
    <property type="entry name" value="PRK00714.1-4"/>
    <property type="match status" value="1"/>
</dbReference>
<dbReference type="NCBIfam" id="NF001938">
    <property type="entry name" value="PRK00714.1-5"/>
    <property type="match status" value="1"/>
</dbReference>
<dbReference type="PANTHER" id="PTHR23114">
    <property type="entry name" value="M7GPPPN-MRNA HYDROLASE"/>
    <property type="match status" value="1"/>
</dbReference>
<dbReference type="PANTHER" id="PTHR23114:SF17">
    <property type="entry name" value="M7GPPPN-MRNA HYDROLASE"/>
    <property type="match status" value="1"/>
</dbReference>
<dbReference type="Pfam" id="PF00293">
    <property type="entry name" value="NUDIX"/>
    <property type="match status" value="1"/>
</dbReference>
<dbReference type="PRINTS" id="PR00502">
    <property type="entry name" value="NUDIXFAMILY"/>
</dbReference>
<dbReference type="SUPFAM" id="SSF55811">
    <property type="entry name" value="Nudix"/>
    <property type="match status" value="1"/>
</dbReference>
<dbReference type="PROSITE" id="PS51462">
    <property type="entry name" value="NUDIX"/>
    <property type="match status" value="1"/>
</dbReference>
<dbReference type="PROSITE" id="PS00893">
    <property type="entry name" value="NUDIX_BOX"/>
    <property type="match status" value="1"/>
</dbReference>
<feature type="chain" id="PRO_1000021924" description="RNA pyrophosphohydrolase">
    <location>
        <begin position="1"/>
        <end position="175"/>
    </location>
</feature>
<feature type="domain" description="Nudix hydrolase" evidence="1">
    <location>
        <begin position="6"/>
        <end position="150"/>
    </location>
</feature>
<feature type="short sequence motif" description="Nudix box">
    <location>
        <begin position="38"/>
        <end position="59"/>
    </location>
</feature>
<protein>
    <recommendedName>
        <fullName evidence="1">RNA pyrophosphohydrolase</fullName>
        <ecNumber evidence="1">3.6.1.-</ecNumber>
    </recommendedName>
    <alternativeName>
        <fullName evidence="1">(Di)nucleoside polyphosphate hydrolase</fullName>
    </alternativeName>
</protein>
<gene>
    <name evidence="1" type="primary">rppH</name>
    <name evidence="1" type="synonym">nudH</name>
    <name type="ordered locus">AHA_0672</name>
</gene>
<keyword id="KW-0378">Hydrolase</keyword>
<keyword id="KW-1185">Reference proteome</keyword>
<proteinExistence type="inferred from homology"/>
<organism>
    <name type="scientific">Aeromonas hydrophila subsp. hydrophila (strain ATCC 7966 / DSM 30187 / BCRC 13018 / CCUG 14551 / JCM 1027 / KCTC 2358 / NCIMB 9240 / NCTC 8049)</name>
    <dbReference type="NCBI Taxonomy" id="380703"/>
    <lineage>
        <taxon>Bacteria</taxon>
        <taxon>Pseudomonadati</taxon>
        <taxon>Pseudomonadota</taxon>
        <taxon>Gammaproteobacteria</taxon>
        <taxon>Aeromonadales</taxon>
        <taxon>Aeromonadaceae</taxon>
        <taxon>Aeromonas</taxon>
    </lineage>
</organism>
<evidence type="ECO:0000255" key="1">
    <source>
        <dbReference type="HAMAP-Rule" id="MF_00298"/>
    </source>
</evidence>
<accession>A0KG29</accession>
<reference key="1">
    <citation type="journal article" date="2006" name="J. Bacteriol.">
        <title>Genome sequence of Aeromonas hydrophila ATCC 7966T: jack of all trades.</title>
        <authorList>
            <person name="Seshadri R."/>
            <person name="Joseph S.W."/>
            <person name="Chopra A.K."/>
            <person name="Sha J."/>
            <person name="Shaw J."/>
            <person name="Graf J."/>
            <person name="Haft D.H."/>
            <person name="Wu M."/>
            <person name="Ren Q."/>
            <person name="Rosovitz M.J."/>
            <person name="Madupu R."/>
            <person name="Tallon L."/>
            <person name="Kim M."/>
            <person name="Jin S."/>
            <person name="Vuong H."/>
            <person name="Stine O.C."/>
            <person name="Ali A."/>
            <person name="Horneman A.J."/>
            <person name="Heidelberg J.F."/>
        </authorList>
    </citation>
    <scope>NUCLEOTIDE SEQUENCE [LARGE SCALE GENOMIC DNA]</scope>
    <source>
        <strain>ATCC 7966 / DSM 30187 / BCRC 13018 / CCUG 14551 / JCM 1027 / KCTC 2358 / NCIMB 9240 / NCTC 8049</strain>
    </source>
</reference>